<sequence>MSSREIRIATRKSALALWQAEYVKARLEQAHPGLLVTLVPMVSRGDKLLDSPLSKIGGKGLFVKELETALLENNADIAVHSMKDVPMDFPQGLGLFCICEREDPRDAFVSNTFASLDQLPAGSIVGTSSLRRQAQLLARRPDLQIRFLRGNVNTRLAKLDAGEYDAIILAAAGLIRLGFEDRITSAISVDDSLPAGGQGAVGIECRSVDAEIHALLAPLHHEDTAVRVIAERSLNKHLNGGCQVPIACYAVLEGDDVWLRGLVGDPSGSVLLHADARAPQTSAQALGVQVAEALLEQGAADILKAVYGEANNE</sequence>
<protein>
    <recommendedName>
        <fullName evidence="1">Porphobilinogen deaminase</fullName>
        <shortName evidence="1">PBG</shortName>
        <ecNumber evidence="1">2.5.1.61</ecNumber>
    </recommendedName>
    <alternativeName>
        <fullName evidence="1">Hydroxymethylbilane synthase</fullName>
        <shortName evidence="1">HMBS</shortName>
    </alternativeName>
    <alternativeName>
        <fullName evidence="1">Pre-uroporphyrinogen synthase</fullName>
    </alternativeName>
</protein>
<keyword id="KW-0627">Porphyrin biosynthesis</keyword>
<keyword id="KW-0808">Transferase</keyword>
<proteinExistence type="inferred from homology"/>
<gene>
    <name evidence="1" type="primary">hemC</name>
    <name type="ordered locus">Psyr_0062</name>
</gene>
<feature type="chain" id="PRO_0000304269" description="Porphobilinogen deaminase">
    <location>
        <begin position="1"/>
        <end position="313"/>
    </location>
</feature>
<feature type="modified residue" description="S-(dipyrrolylmethanemethyl)cysteine" evidence="1">
    <location>
        <position position="242"/>
    </location>
</feature>
<evidence type="ECO:0000255" key="1">
    <source>
        <dbReference type="HAMAP-Rule" id="MF_00260"/>
    </source>
</evidence>
<organism>
    <name type="scientific">Pseudomonas syringae pv. syringae (strain B728a)</name>
    <dbReference type="NCBI Taxonomy" id="205918"/>
    <lineage>
        <taxon>Bacteria</taxon>
        <taxon>Pseudomonadati</taxon>
        <taxon>Pseudomonadota</taxon>
        <taxon>Gammaproteobacteria</taxon>
        <taxon>Pseudomonadales</taxon>
        <taxon>Pseudomonadaceae</taxon>
        <taxon>Pseudomonas</taxon>
        <taxon>Pseudomonas syringae</taxon>
    </lineage>
</organism>
<reference key="1">
    <citation type="journal article" date="2005" name="Proc. Natl. Acad. Sci. U.S.A.">
        <title>Comparison of the complete genome sequences of Pseudomonas syringae pv. syringae B728a and pv. tomato DC3000.</title>
        <authorList>
            <person name="Feil H."/>
            <person name="Feil W.S."/>
            <person name="Chain P."/>
            <person name="Larimer F."/>
            <person name="Dibartolo G."/>
            <person name="Copeland A."/>
            <person name="Lykidis A."/>
            <person name="Trong S."/>
            <person name="Nolan M."/>
            <person name="Goltsman E."/>
            <person name="Thiel J."/>
            <person name="Malfatti S."/>
            <person name="Loper J.E."/>
            <person name="Lapidus A."/>
            <person name="Detter J.C."/>
            <person name="Land M."/>
            <person name="Richardson P.M."/>
            <person name="Kyrpides N.C."/>
            <person name="Ivanova N."/>
            <person name="Lindow S.E."/>
        </authorList>
    </citation>
    <scope>NUCLEOTIDE SEQUENCE [LARGE SCALE GENOMIC DNA]</scope>
    <source>
        <strain>B728a</strain>
    </source>
</reference>
<dbReference type="EC" id="2.5.1.61" evidence="1"/>
<dbReference type="EMBL" id="CP000075">
    <property type="protein sequence ID" value="AAY35136.1"/>
    <property type="molecule type" value="Genomic_DNA"/>
</dbReference>
<dbReference type="RefSeq" id="WP_003318426.1">
    <property type="nucleotide sequence ID" value="NC_007005.1"/>
</dbReference>
<dbReference type="RefSeq" id="YP_233174.1">
    <property type="nucleotide sequence ID" value="NC_007005.1"/>
</dbReference>
<dbReference type="SMR" id="Q500N6"/>
<dbReference type="STRING" id="205918.Psyr_0062"/>
<dbReference type="GeneID" id="77281091"/>
<dbReference type="KEGG" id="psb:Psyr_0062"/>
<dbReference type="PATRIC" id="fig|205918.7.peg.61"/>
<dbReference type="eggNOG" id="COG0181">
    <property type="taxonomic scope" value="Bacteria"/>
</dbReference>
<dbReference type="HOGENOM" id="CLU_019704_0_2_6"/>
<dbReference type="OrthoDB" id="9810298at2"/>
<dbReference type="UniPathway" id="UPA00251">
    <property type="reaction ID" value="UER00319"/>
</dbReference>
<dbReference type="Proteomes" id="UP000000426">
    <property type="component" value="Chromosome"/>
</dbReference>
<dbReference type="GO" id="GO:0005737">
    <property type="term" value="C:cytoplasm"/>
    <property type="evidence" value="ECO:0007669"/>
    <property type="project" value="TreeGrafter"/>
</dbReference>
<dbReference type="GO" id="GO:0004418">
    <property type="term" value="F:hydroxymethylbilane synthase activity"/>
    <property type="evidence" value="ECO:0007669"/>
    <property type="project" value="UniProtKB-UniRule"/>
</dbReference>
<dbReference type="GO" id="GO:0006782">
    <property type="term" value="P:protoporphyrinogen IX biosynthetic process"/>
    <property type="evidence" value="ECO:0007669"/>
    <property type="project" value="UniProtKB-UniRule"/>
</dbReference>
<dbReference type="CDD" id="cd13646">
    <property type="entry name" value="PBP2_EcHMBS_like"/>
    <property type="match status" value="1"/>
</dbReference>
<dbReference type="FunFam" id="3.30.160.40:FF:000002">
    <property type="entry name" value="Porphobilinogen deaminase"/>
    <property type="match status" value="1"/>
</dbReference>
<dbReference type="FunFam" id="3.40.190.10:FF:000004">
    <property type="entry name" value="Porphobilinogen deaminase"/>
    <property type="match status" value="1"/>
</dbReference>
<dbReference type="FunFam" id="3.40.190.10:FF:000005">
    <property type="entry name" value="Porphobilinogen deaminase"/>
    <property type="match status" value="1"/>
</dbReference>
<dbReference type="Gene3D" id="3.40.190.10">
    <property type="entry name" value="Periplasmic binding protein-like II"/>
    <property type="match status" value="2"/>
</dbReference>
<dbReference type="Gene3D" id="3.30.160.40">
    <property type="entry name" value="Porphobilinogen deaminase, C-terminal domain"/>
    <property type="match status" value="1"/>
</dbReference>
<dbReference type="HAMAP" id="MF_00260">
    <property type="entry name" value="Porphobil_deam"/>
    <property type="match status" value="1"/>
</dbReference>
<dbReference type="InterPro" id="IPR000860">
    <property type="entry name" value="HemC"/>
</dbReference>
<dbReference type="InterPro" id="IPR022419">
    <property type="entry name" value="Porphobilin_deaminase_cofac_BS"/>
</dbReference>
<dbReference type="InterPro" id="IPR022417">
    <property type="entry name" value="Porphobilin_deaminase_N"/>
</dbReference>
<dbReference type="InterPro" id="IPR022418">
    <property type="entry name" value="Porphobilinogen_deaminase_C"/>
</dbReference>
<dbReference type="InterPro" id="IPR036803">
    <property type="entry name" value="Porphobilinogen_deaminase_C_sf"/>
</dbReference>
<dbReference type="NCBIfam" id="TIGR00212">
    <property type="entry name" value="hemC"/>
    <property type="match status" value="1"/>
</dbReference>
<dbReference type="PANTHER" id="PTHR11557">
    <property type="entry name" value="PORPHOBILINOGEN DEAMINASE"/>
    <property type="match status" value="1"/>
</dbReference>
<dbReference type="PANTHER" id="PTHR11557:SF0">
    <property type="entry name" value="PORPHOBILINOGEN DEAMINASE"/>
    <property type="match status" value="1"/>
</dbReference>
<dbReference type="Pfam" id="PF01379">
    <property type="entry name" value="Porphobil_deam"/>
    <property type="match status" value="1"/>
</dbReference>
<dbReference type="Pfam" id="PF03900">
    <property type="entry name" value="Porphobil_deamC"/>
    <property type="match status" value="1"/>
</dbReference>
<dbReference type="PIRSF" id="PIRSF001438">
    <property type="entry name" value="4pyrrol_synth_OHMeBilane_synth"/>
    <property type="match status" value="1"/>
</dbReference>
<dbReference type="PRINTS" id="PR00151">
    <property type="entry name" value="PORPHBDMNASE"/>
</dbReference>
<dbReference type="SUPFAM" id="SSF53850">
    <property type="entry name" value="Periplasmic binding protein-like II"/>
    <property type="match status" value="1"/>
</dbReference>
<dbReference type="SUPFAM" id="SSF54782">
    <property type="entry name" value="Porphobilinogen deaminase (hydroxymethylbilane synthase), C-terminal domain"/>
    <property type="match status" value="1"/>
</dbReference>
<dbReference type="PROSITE" id="PS00533">
    <property type="entry name" value="PORPHOBILINOGEN_DEAM"/>
    <property type="match status" value="1"/>
</dbReference>
<name>HEM3_PSEU2</name>
<accession>Q500N6</accession>
<comment type="function">
    <text evidence="1">Tetrapolymerization of the monopyrrole PBG into the hydroxymethylbilane pre-uroporphyrinogen in several discrete steps.</text>
</comment>
<comment type="catalytic activity">
    <reaction evidence="1">
        <text>4 porphobilinogen + H2O = hydroxymethylbilane + 4 NH4(+)</text>
        <dbReference type="Rhea" id="RHEA:13185"/>
        <dbReference type="ChEBI" id="CHEBI:15377"/>
        <dbReference type="ChEBI" id="CHEBI:28938"/>
        <dbReference type="ChEBI" id="CHEBI:57845"/>
        <dbReference type="ChEBI" id="CHEBI:58126"/>
        <dbReference type="EC" id="2.5.1.61"/>
    </reaction>
</comment>
<comment type="cofactor">
    <cofactor evidence="1">
        <name>dipyrromethane</name>
        <dbReference type="ChEBI" id="CHEBI:60342"/>
    </cofactor>
    <text evidence="1">Binds 1 dipyrromethane group covalently.</text>
</comment>
<comment type="pathway">
    <text evidence="1">Porphyrin-containing compound metabolism; protoporphyrin-IX biosynthesis; coproporphyrinogen-III from 5-aminolevulinate: step 2/4.</text>
</comment>
<comment type="subunit">
    <text evidence="1">Monomer.</text>
</comment>
<comment type="miscellaneous">
    <text evidence="1">The porphobilinogen subunits are added to the dipyrromethane group.</text>
</comment>
<comment type="similarity">
    <text evidence="1">Belongs to the HMBS family.</text>
</comment>